<dbReference type="EC" id="1.14.14.17" evidence="1"/>
<dbReference type="EMBL" id="CR380950">
    <property type="protein sequence ID" value="CAG58578.1"/>
    <property type="molecule type" value="Genomic_DNA"/>
</dbReference>
<dbReference type="EMBL" id="AF006033">
    <property type="protein sequence ID" value="AAB69189.1"/>
    <property type="molecule type" value="Genomic_DNA"/>
</dbReference>
<dbReference type="RefSeq" id="XP_445667.1">
    <property type="nucleotide sequence ID" value="XM_445667.1"/>
</dbReference>
<dbReference type="SMR" id="O13306"/>
<dbReference type="FunCoup" id="O13306">
    <property type="interactions" value="203"/>
</dbReference>
<dbReference type="STRING" id="284593.O13306"/>
<dbReference type="EnsemblFungi" id="CAGL0D05940g-T">
    <property type="protein sequence ID" value="CAGL0D05940g-T-p1"/>
    <property type="gene ID" value="CAGL0D05940g"/>
</dbReference>
<dbReference type="GeneID" id="2887028"/>
<dbReference type="KEGG" id="cgr:2887028"/>
<dbReference type="CGD" id="CAL0128393">
    <property type="gene designation" value="ERG1"/>
</dbReference>
<dbReference type="VEuPathDB" id="FungiDB:B1J91_D05940g"/>
<dbReference type="VEuPathDB" id="FungiDB:CAGL0D05940g"/>
<dbReference type="eggNOG" id="KOG1298">
    <property type="taxonomic scope" value="Eukaryota"/>
</dbReference>
<dbReference type="HOGENOM" id="CLU_026390_0_0_1"/>
<dbReference type="InParanoid" id="O13306"/>
<dbReference type="OMA" id="AKRTFYW"/>
<dbReference type="UniPathway" id="UPA00767">
    <property type="reaction ID" value="UER00752"/>
</dbReference>
<dbReference type="Proteomes" id="UP000002428">
    <property type="component" value="Chromosome D"/>
</dbReference>
<dbReference type="GO" id="GO:0005789">
    <property type="term" value="C:endoplasmic reticulum membrane"/>
    <property type="evidence" value="ECO:0007669"/>
    <property type="project" value="UniProtKB-SubCell"/>
</dbReference>
<dbReference type="GO" id="GO:0005811">
    <property type="term" value="C:lipid droplet"/>
    <property type="evidence" value="ECO:0007669"/>
    <property type="project" value="EnsemblFungi"/>
</dbReference>
<dbReference type="GO" id="GO:0050660">
    <property type="term" value="F:flavin adenine dinucleotide binding"/>
    <property type="evidence" value="ECO:0007669"/>
    <property type="project" value="InterPro"/>
</dbReference>
<dbReference type="GO" id="GO:0004506">
    <property type="term" value="F:squalene monooxygenase activity"/>
    <property type="evidence" value="ECO:0007669"/>
    <property type="project" value="UniProtKB-EC"/>
</dbReference>
<dbReference type="GO" id="GO:0006696">
    <property type="term" value="P:ergosterol biosynthetic process"/>
    <property type="evidence" value="ECO:0007669"/>
    <property type="project" value="EnsemblFungi"/>
</dbReference>
<dbReference type="GO" id="GO:0008204">
    <property type="term" value="P:ergosterol metabolic process"/>
    <property type="evidence" value="ECO:0000315"/>
    <property type="project" value="CGD"/>
</dbReference>
<dbReference type="FunFam" id="3.50.50.60:FF:000325">
    <property type="entry name" value="Squalene monooxygenase"/>
    <property type="match status" value="1"/>
</dbReference>
<dbReference type="Gene3D" id="3.50.50.60">
    <property type="entry name" value="FAD/NAD(P)-binding domain"/>
    <property type="match status" value="2"/>
</dbReference>
<dbReference type="InterPro" id="IPR036188">
    <property type="entry name" value="FAD/NAD-bd_sf"/>
</dbReference>
<dbReference type="InterPro" id="IPR013698">
    <property type="entry name" value="Squalene_epoxidase"/>
</dbReference>
<dbReference type="InterPro" id="IPR040125">
    <property type="entry name" value="Squalene_monox"/>
</dbReference>
<dbReference type="PANTHER" id="PTHR10835">
    <property type="entry name" value="SQUALENE MONOOXYGENASE"/>
    <property type="match status" value="1"/>
</dbReference>
<dbReference type="PANTHER" id="PTHR10835:SF0">
    <property type="entry name" value="SQUALENE MONOOXYGENASE"/>
    <property type="match status" value="1"/>
</dbReference>
<dbReference type="Pfam" id="PF08491">
    <property type="entry name" value="SE"/>
    <property type="match status" value="1"/>
</dbReference>
<dbReference type="PRINTS" id="PR00420">
    <property type="entry name" value="RNGMNOXGNASE"/>
</dbReference>
<dbReference type="SUPFAM" id="SSF51905">
    <property type="entry name" value="FAD/NAD(P)-binding domain"/>
    <property type="match status" value="1"/>
</dbReference>
<reference key="1">
    <citation type="journal article" date="2004" name="Nature">
        <title>Genome evolution in yeasts.</title>
        <authorList>
            <person name="Dujon B."/>
            <person name="Sherman D."/>
            <person name="Fischer G."/>
            <person name="Durrens P."/>
            <person name="Casaregola S."/>
            <person name="Lafontaine I."/>
            <person name="de Montigny J."/>
            <person name="Marck C."/>
            <person name="Neuveglise C."/>
            <person name="Talla E."/>
            <person name="Goffard N."/>
            <person name="Frangeul L."/>
            <person name="Aigle M."/>
            <person name="Anthouard V."/>
            <person name="Babour A."/>
            <person name="Barbe V."/>
            <person name="Barnay S."/>
            <person name="Blanchin S."/>
            <person name="Beckerich J.-M."/>
            <person name="Beyne E."/>
            <person name="Bleykasten C."/>
            <person name="Boisrame A."/>
            <person name="Boyer J."/>
            <person name="Cattolico L."/>
            <person name="Confanioleri F."/>
            <person name="de Daruvar A."/>
            <person name="Despons L."/>
            <person name="Fabre E."/>
            <person name="Fairhead C."/>
            <person name="Ferry-Dumazet H."/>
            <person name="Groppi A."/>
            <person name="Hantraye F."/>
            <person name="Hennequin C."/>
            <person name="Jauniaux N."/>
            <person name="Joyet P."/>
            <person name="Kachouri R."/>
            <person name="Kerrest A."/>
            <person name="Koszul R."/>
            <person name="Lemaire M."/>
            <person name="Lesur I."/>
            <person name="Ma L."/>
            <person name="Muller H."/>
            <person name="Nicaud J.-M."/>
            <person name="Nikolski M."/>
            <person name="Oztas S."/>
            <person name="Ozier-Kalogeropoulos O."/>
            <person name="Pellenz S."/>
            <person name="Potier S."/>
            <person name="Richard G.-F."/>
            <person name="Straub M.-L."/>
            <person name="Suleau A."/>
            <person name="Swennen D."/>
            <person name="Tekaia F."/>
            <person name="Wesolowski-Louvel M."/>
            <person name="Westhof E."/>
            <person name="Wirth B."/>
            <person name="Zeniou-Meyer M."/>
            <person name="Zivanovic Y."/>
            <person name="Bolotin-Fukuhara M."/>
            <person name="Thierry A."/>
            <person name="Bouchier C."/>
            <person name="Caudron B."/>
            <person name="Scarpelli C."/>
            <person name="Gaillardin C."/>
            <person name="Weissenbach J."/>
            <person name="Wincker P."/>
            <person name="Souciet J.-L."/>
        </authorList>
    </citation>
    <scope>NUCLEOTIDE SEQUENCE [LARGE SCALE GENOMIC DNA]</scope>
    <source>
        <strain>ATCC 2001 / BCRC 20586 / JCM 3761 / NBRC 0622 / NRRL Y-65 / CBS 138</strain>
    </source>
</reference>
<reference key="2">
    <citation type="journal article" date="1997" name="Antimicrob. Agents Chemother.">
        <title>Molecular biological characterization of an azole-resistant Candida glabrata isolate.</title>
        <authorList>
            <person name="Marichal P."/>
            <person name="Vanden Bossche H."/>
            <person name="Odds F.C."/>
            <person name="Nobels G."/>
            <person name="Warnock D.W."/>
            <person name="Timmerman V."/>
            <person name="Van Broeckhoven C."/>
            <person name="Fay S."/>
            <person name="Mose-Larsen P."/>
        </authorList>
    </citation>
    <scope>NUCLEOTIDE SEQUENCE [GENOMIC DNA] OF 139-344</scope>
    <source>
        <strain>B57148</strain>
    </source>
</reference>
<proteinExistence type="inferred from homology"/>
<organism>
    <name type="scientific">Candida glabrata (strain ATCC 2001 / BCRC 20586 / JCM 3761 / NBRC 0622 / NRRL Y-65 / CBS 138)</name>
    <name type="common">Yeast</name>
    <name type="synonym">Nakaseomyces glabratus</name>
    <dbReference type="NCBI Taxonomy" id="284593"/>
    <lineage>
        <taxon>Eukaryota</taxon>
        <taxon>Fungi</taxon>
        <taxon>Dikarya</taxon>
        <taxon>Ascomycota</taxon>
        <taxon>Saccharomycotina</taxon>
        <taxon>Saccharomycetes</taxon>
        <taxon>Saccharomycetales</taxon>
        <taxon>Saccharomycetaceae</taxon>
        <taxon>Nakaseomyces</taxon>
    </lineage>
</organism>
<evidence type="ECO:0000250" key="1">
    <source>
        <dbReference type="UniProtKB" id="P32476"/>
    </source>
</evidence>
<evidence type="ECO:0000250" key="2">
    <source>
        <dbReference type="UniProtKB" id="Q14534"/>
    </source>
</evidence>
<evidence type="ECO:0000255" key="3"/>
<evidence type="ECO:0000305" key="4"/>
<comment type="function">
    <text evidence="1">Catalyzes the stereospecific oxidation of squalene to (S)-2,3-epoxysqualene, and is considered to be a rate-limiting enzyme in steroid biosynthesis.</text>
</comment>
<comment type="catalytic activity">
    <reaction evidence="1">
        <text>squalene + reduced [NADPH--hemoprotein reductase] + O2 = (S)-2,3-epoxysqualene + oxidized [NADPH--hemoprotein reductase] + H2O + H(+)</text>
        <dbReference type="Rhea" id="RHEA:25282"/>
        <dbReference type="Rhea" id="RHEA-COMP:11964"/>
        <dbReference type="Rhea" id="RHEA-COMP:11965"/>
        <dbReference type="ChEBI" id="CHEBI:15377"/>
        <dbReference type="ChEBI" id="CHEBI:15378"/>
        <dbReference type="ChEBI" id="CHEBI:15379"/>
        <dbReference type="ChEBI" id="CHEBI:15440"/>
        <dbReference type="ChEBI" id="CHEBI:15441"/>
        <dbReference type="ChEBI" id="CHEBI:57618"/>
        <dbReference type="ChEBI" id="CHEBI:58210"/>
        <dbReference type="EC" id="1.14.14.17"/>
    </reaction>
</comment>
<comment type="cofactor">
    <cofactor evidence="2">
        <name>FAD</name>
        <dbReference type="ChEBI" id="CHEBI:57692"/>
    </cofactor>
</comment>
<comment type="pathway">
    <text evidence="1">Terpene metabolism; lanosterol biosynthesis; lanosterol from farnesyl diphosphate: step 2/3.</text>
</comment>
<comment type="subcellular location">
    <subcellularLocation>
        <location evidence="1">Microsome membrane</location>
        <topology evidence="1">Multi-pass membrane protein</topology>
    </subcellularLocation>
    <subcellularLocation>
        <location evidence="1">Endoplasmic reticulum membrane</location>
        <topology evidence="1">Multi-pass membrane protein</topology>
    </subcellularLocation>
</comment>
<comment type="similarity">
    <text evidence="4">Belongs to the squalene monooxygenase family.</text>
</comment>
<keyword id="KW-0256">Endoplasmic reticulum</keyword>
<keyword id="KW-0274">FAD</keyword>
<keyword id="KW-0285">Flavoprotein</keyword>
<keyword id="KW-0472">Membrane</keyword>
<keyword id="KW-0492">Microsome</keyword>
<keyword id="KW-0560">Oxidoreductase</keyword>
<keyword id="KW-1185">Reference proteome</keyword>
<keyword id="KW-0812">Transmembrane</keyword>
<keyword id="KW-1133">Transmembrane helix</keyword>
<protein>
    <recommendedName>
        <fullName>Squalene monooxygenase</fullName>
        <ecNumber evidence="1">1.14.14.17</ecNumber>
    </recommendedName>
    <alternativeName>
        <fullName>Squalene epoxidase</fullName>
        <shortName>SE</shortName>
    </alternativeName>
</protein>
<gene>
    <name type="primary">ERG1</name>
    <name type="ordered locus">CAGL0D05940g</name>
</gene>
<sequence>MSLTNADETVTYDALIVGAGVIGPCVATALARKGKKVLIVEREWSQPDRIVGELMQPGGLRALRSLGMIQSINNIDAYPVTGYTVFYNGEHVDIPYPYKADLKPVEKLPGLVRDGNDKVLEDATVHKKDFEDDERERGVGLVHGRFLNNLRNICAAEPNVTRLQGNVVEILKDKKNEVVGAKVDVDSRGKVDFKAHLTFVCDGIFSRFRRELHPDHVPTVNSSFVGMSLYHAHMPHDMHGHVILGDKHMPILVYQISPEETRILCAYNAPKVPTDLKSWMTKDVQPYIPKTLRPSFDDALAQGKFKPMANSWLPARQNDVTGLCVIGDALNMRHPLTGGGMTVGLNDVVLLIKKIGDLDFSDREKVLDELLDYHFERKNYDAVVNVLSISLYSLFAADSKNLKALQKGCFKYFQRGGDCVNLPVAFLAGVLPKPLLLTRVFFAVAFYTIYLNMEERGFLGLPMALLEGIMILITAIKVFTPFLVRELIG</sequence>
<name>ERG1_CANGA</name>
<feature type="chain" id="PRO_0000209849" description="Squalene monooxygenase">
    <location>
        <begin position="1"/>
        <end position="489"/>
    </location>
</feature>
<feature type="transmembrane region" description="Helical" evidence="3">
    <location>
        <begin position="10"/>
        <end position="30"/>
    </location>
</feature>
<feature type="transmembrane region" description="Helical" evidence="3">
    <location>
        <begin position="426"/>
        <end position="446"/>
    </location>
</feature>
<feature type="transmembrane region" description="Helical" evidence="3">
    <location>
        <begin position="464"/>
        <end position="484"/>
    </location>
</feature>
<feature type="binding site" evidence="2">
    <location>
        <begin position="21"/>
        <end position="22"/>
    </location>
    <ligand>
        <name>FAD</name>
        <dbReference type="ChEBI" id="CHEBI:57692"/>
    </ligand>
</feature>
<feature type="binding site" evidence="2">
    <location>
        <begin position="41"/>
        <end position="42"/>
    </location>
    <ligand>
        <name>FAD</name>
        <dbReference type="ChEBI" id="CHEBI:57692"/>
    </ligand>
</feature>
<feature type="binding site" evidence="2">
    <location>
        <position position="49"/>
    </location>
    <ligand>
        <name>FAD</name>
        <dbReference type="ChEBI" id="CHEBI:57692"/>
    </ligand>
</feature>
<feature type="binding site" evidence="2">
    <location>
        <position position="151"/>
    </location>
    <ligand>
        <name>FAD</name>
        <dbReference type="ChEBI" id="CHEBI:57692"/>
    </ligand>
</feature>
<feature type="binding site" evidence="2">
    <location>
        <position position="167"/>
    </location>
    <ligand>
        <name>FAD</name>
        <dbReference type="ChEBI" id="CHEBI:57692"/>
    </ligand>
</feature>
<feature type="binding site" evidence="2">
    <location>
        <position position="328"/>
    </location>
    <ligand>
        <name>FAD</name>
        <dbReference type="ChEBI" id="CHEBI:57692"/>
    </ligand>
</feature>
<feature type="binding site" evidence="2">
    <location>
        <position position="341"/>
    </location>
    <ligand>
        <name>FAD</name>
        <dbReference type="ChEBI" id="CHEBI:57692"/>
    </ligand>
</feature>
<feature type="site" description="Important for enzyme activity" evidence="2">
    <location>
        <position position="83"/>
    </location>
</feature>
<feature type="sequence conflict" description="In Ref. 2; AAB69189." evidence="4" ref="2">
    <original>GL</original>
    <variation>AF</variation>
    <location>
        <begin position="140"/>
        <end position="141"/>
    </location>
</feature>
<accession>O13306</accession>
<accession>Q6FVS7</accession>